<organism>
    <name type="scientific">Xanthomonas oryzae pv. oryzae (strain KACC10331 / KXO85)</name>
    <dbReference type="NCBI Taxonomy" id="291331"/>
    <lineage>
        <taxon>Bacteria</taxon>
        <taxon>Pseudomonadati</taxon>
        <taxon>Pseudomonadota</taxon>
        <taxon>Gammaproteobacteria</taxon>
        <taxon>Lysobacterales</taxon>
        <taxon>Lysobacteraceae</taxon>
        <taxon>Xanthomonas</taxon>
    </lineage>
</organism>
<evidence type="ECO:0000255" key="1">
    <source>
        <dbReference type="HAMAP-Rule" id="MF_00059"/>
    </source>
</evidence>
<keyword id="KW-0240">DNA-directed RNA polymerase</keyword>
<keyword id="KW-0548">Nucleotidyltransferase</keyword>
<keyword id="KW-1185">Reference proteome</keyword>
<keyword id="KW-0804">Transcription</keyword>
<keyword id="KW-0808">Transferase</keyword>
<reference key="1">
    <citation type="journal article" date="2005" name="Nucleic Acids Res.">
        <title>The genome sequence of Xanthomonas oryzae pathovar oryzae KACC10331, the bacterial blight pathogen of rice.</title>
        <authorList>
            <person name="Lee B.-M."/>
            <person name="Park Y.-J."/>
            <person name="Park D.-S."/>
            <person name="Kang H.-W."/>
            <person name="Kim J.-G."/>
            <person name="Song E.-S."/>
            <person name="Park I.-C."/>
            <person name="Yoon U.-H."/>
            <person name="Hahn J.-H."/>
            <person name="Koo B.-S."/>
            <person name="Lee G.-B."/>
            <person name="Kim H."/>
            <person name="Park H.-S."/>
            <person name="Yoon K.-O."/>
            <person name="Kim J.-H."/>
            <person name="Jung C.-H."/>
            <person name="Koh N.-H."/>
            <person name="Seo J.-S."/>
            <person name="Go S.-J."/>
        </authorList>
    </citation>
    <scope>NUCLEOTIDE SEQUENCE [LARGE SCALE GENOMIC DNA]</scope>
    <source>
        <strain>KACC10331 / KXO85</strain>
    </source>
</reference>
<gene>
    <name evidence="1" type="primary">rpoA</name>
    <name type="ordered locus">XOO3558</name>
</gene>
<proteinExistence type="inferred from homology"/>
<protein>
    <recommendedName>
        <fullName evidence="1">DNA-directed RNA polymerase subunit alpha</fullName>
        <shortName evidence="1">RNAP subunit alpha</shortName>
        <ecNumber evidence="1">2.7.7.6</ecNumber>
    </recommendedName>
    <alternativeName>
        <fullName evidence="1">RNA polymerase subunit alpha</fullName>
    </alternativeName>
    <alternativeName>
        <fullName evidence="1">Transcriptase subunit alpha</fullName>
    </alternativeName>
</protein>
<accession>Q5GWV9</accession>
<feature type="chain" id="PRO_0000225315" description="DNA-directed RNA polymerase subunit alpha">
    <location>
        <begin position="1"/>
        <end position="332"/>
    </location>
</feature>
<feature type="region of interest" description="Alpha N-terminal domain (alpha-NTD)" evidence="1">
    <location>
        <begin position="1"/>
        <end position="234"/>
    </location>
</feature>
<feature type="region of interest" description="Alpha C-terminal domain (alpha-CTD)" evidence="1">
    <location>
        <begin position="248"/>
        <end position="332"/>
    </location>
</feature>
<sequence>MTVTANQVLRPRGPQIERLTDNRAKVVIEPLERGYGHTLGNALRRVLLSSIPGFAITEVEIDGVLHEYTTVEGLQEDVLDVLLNLKDVAIRMHSGDSATLSLSKQGPGTVTAADIRTDHNVEIINGDHVICHLTKDTALNMRLKIERGFGYQPAAARRRPDEETRTIGRLMLDASFSPVRRVAYAVEAARVEQRTDLDKLVIDIETNGTIDAEEAVRTAADILSDQLSVFGDFTHRDRGAAKPAASGVDPVLLRPIDDLELTVRSANCLKAESIYYIGDLIQKTEVELLKTPNLGKKSLTEIKEVLAQRGLALGMKLENWPPAGVAQHGMLG</sequence>
<dbReference type="EC" id="2.7.7.6" evidence="1"/>
<dbReference type="EMBL" id="AE013598">
    <property type="protein sequence ID" value="AAW76812.1"/>
    <property type="molecule type" value="Genomic_DNA"/>
</dbReference>
<dbReference type="SMR" id="Q5GWV9"/>
<dbReference type="STRING" id="291331.XOO3558"/>
<dbReference type="KEGG" id="xoo:XOO3558"/>
<dbReference type="HOGENOM" id="CLU_053084_0_1_6"/>
<dbReference type="Proteomes" id="UP000006735">
    <property type="component" value="Chromosome"/>
</dbReference>
<dbReference type="GO" id="GO:0005737">
    <property type="term" value="C:cytoplasm"/>
    <property type="evidence" value="ECO:0007669"/>
    <property type="project" value="UniProtKB-ARBA"/>
</dbReference>
<dbReference type="GO" id="GO:0000428">
    <property type="term" value="C:DNA-directed RNA polymerase complex"/>
    <property type="evidence" value="ECO:0007669"/>
    <property type="project" value="UniProtKB-KW"/>
</dbReference>
<dbReference type="GO" id="GO:0003677">
    <property type="term" value="F:DNA binding"/>
    <property type="evidence" value="ECO:0007669"/>
    <property type="project" value="UniProtKB-UniRule"/>
</dbReference>
<dbReference type="GO" id="GO:0003899">
    <property type="term" value="F:DNA-directed RNA polymerase activity"/>
    <property type="evidence" value="ECO:0007669"/>
    <property type="project" value="UniProtKB-UniRule"/>
</dbReference>
<dbReference type="GO" id="GO:0046983">
    <property type="term" value="F:protein dimerization activity"/>
    <property type="evidence" value="ECO:0007669"/>
    <property type="project" value="InterPro"/>
</dbReference>
<dbReference type="GO" id="GO:0006351">
    <property type="term" value="P:DNA-templated transcription"/>
    <property type="evidence" value="ECO:0007669"/>
    <property type="project" value="UniProtKB-UniRule"/>
</dbReference>
<dbReference type="CDD" id="cd06928">
    <property type="entry name" value="RNAP_alpha_NTD"/>
    <property type="match status" value="1"/>
</dbReference>
<dbReference type="FunFam" id="1.10.150.20:FF:000001">
    <property type="entry name" value="DNA-directed RNA polymerase subunit alpha"/>
    <property type="match status" value="1"/>
</dbReference>
<dbReference type="FunFam" id="2.170.120.12:FF:000001">
    <property type="entry name" value="DNA-directed RNA polymerase subunit alpha"/>
    <property type="match status" value="1"/>
</dbReference>
<dbReference type="Gene3D" id="1.10.150.20">
    <property type="entry name" value="5' to 3' exonuclease, C-terminal subdomain"/>
    <property type="match status" value="1"/>
</dbReference>
<dbReference type="Gene3D" id="2.170.120.12">
    <property type="entry name" value="DNA-directed RNA polymerase, insert domain"/>
    <property type="match status" value="1"/>
</dbReference>
<dbReference type="Gene3D" id="3.30.1360.10">
    <property type="entry name" value="RNA polymerase, RBP11-like subunit"/>
    <property type="match status" value="1"/>
</dbReference>
<dbReference type="HAMAP" id="MF_00059">
    <property type="entry name" value="RNApol_bact_RpoA"/>
    <property type="match status" value="1"/>
</dbReference>
<dbReference type="InterPro" id="IPR011262">
    <property type="entry name" value="DNA-dir_RNA_pol_insert"/>
</dbReference>
<dbReference type="InterPro" id="IPR011263">
    <property type="entry name" value="DNA-dir_RNA_pol_RpoA/D/Rpb3"/>
</dbReference>
<dbReference type="InterPro" id="IPR011773">
    <property type="entry name" value="DNA-dir_RpoA"/>
</dbReference>
<dbReference type="InterPro" id="IPR036603">
    <property type="entry name" value="RBP11-like"/>
</dbReference>
<dbReference type="InterPro" id="IPR011260">
    <property type="entry name" value="RNAP_asu_C"/>
</dbReference>
<dbReference type="InterPro" id="IPR036643">
    <property type="entry name" value="RNApol_insert_sf"/>
</dbReference>
<dbReference type="NCBIfam" id="NF003513">
    <property type="entry name" value="PRK05182.1-2"/>
    <property type="match status" value="1"/>
</dbReference>
<dbReference type="NCBIfam" id="NF003519">
    <property type="entry name" value="PRK05182.2-5"/>
    <property type="match status" value="1"/>
</dbReference>
<dbReference type="NCBIfam" id="TIGR02027">
    <property type="entry name" value="rpoA"/>
    <property type="match status" value="1"/>
</dbReference>
<dbReference type="Pfam" id="PF01000">
    <property type="entry name" value="RNA_pol_A_bac"/>
    <property type="match status" value="1"/>
</dbReference>
<dbReference type="Pfam" id="PF03118">
    <property type="entry name" value="RNA_pol_A_CTD"/>
    <property type="match status" value="1"/>
</dbReference>
<dbReference type="Pfam" id="PF01193">
    <property type="entry name" value="RNA_pol_L"/>
    <property type="match status" value="1"/>
</dbReference>
<dbReference type="SMART" id="SM00662">
    <property type="entry name" value="RPOLD"/>
    <property type="match status" value="1"/>
</dbReference>
<dbReference type="SUPFAM" id="SSF47789">
    <property type="entry name" value="C-terminal domain of RNA polymerase alpha subunit"/>
    <property type="match status" value="1"/>
</dbReference>
<dbReference type="SUPFAM" id="SSF56553">
    <property type="entry name" value="Insert subdomain of RNA polymerase alpha subunit"/>
    <property type="match status" value="1"/>
</dbReference>
<dbReference type="SUPFAM" id="SSF55257">
    <property type="entry name" value="RBP11-like subunits of RNA polymerase"/>
    <property type="match status" value="1"/>
</dbReference>
<name>RPOA_XANOR</name>
<comment type="function">
    <text evidence="1">DNA-dependent RNA polymerase catalyzes the transcription of DNA into RNA using the four ribonucleoside triphosphates as substrates.</text>
</comment>
<comment type="catalytic activity">
    <reaction evidence="1">
        <text>RNA(n) + a ribonucleoside 5'-triphosphate = RNA(n+1) + diphosphate</text>
        <dbReference type="Rhea" id="RHEA:21248"/>
        <dbReference type="Rhea" id="RHEA-COMP:14527"/>
        <dbReference type="Rhea" id="RHEA-COMP:17342"/>
        <dbReference type="ChEBI" id="CHEBI:33019"/>
        <dbReference type="ChEBI" id="CHEBI:61557"/>
        <dbReference type="ChEBI" id="CHEBI:140395"/>
        <dbReference type="EC" id="2.7.7.6"/>
    </reaction>
</comment>
<comment type="subunit">
    <text evidence="1">Homodimer. The RNAP catalytic core consists of 2 alpha, 1 beta, 1 beta' and 1 omega subunit. When a sigma factor is associated with the core the holoenzyme is formed, which can initiate transcription.</text>
</comment>
<comment type="domain">
    <text evidence="1">The N-terminal domain is essential for RNAP assembly and basal transcription, whereas the C-terminal domain is involved in interaction with transcriptional regulators and with upstream promoter elements.</text>
</comment>
<comment type="similarity">
    <text evidence="1">Belongs to the RNA polymerase alpha chain family.</text>
</comment>